<comment type="function">
    <text evidence="1">The beta subunit is responsible for the synthesis of L-tryptophan from indole and L-serine.</text>
</comment>
<comment type="catalytic activity">
    <reaction>
        <text>(1S,2R)-1-C-(indol-3-yl)glycerol 3-phosphate + L-serine = D-glyceraldehyde 3-phosphate + L-tryptophan + H2O</text>
        <dbReference type="Rhea" id="RHEA:10532"/>
        <dbReference type="ChEBI" id="CHEBI:15377"/>
        <dbReference type="ChEBI" id="CHEBI:33384"/>
        <dbReference type="ChEBI" id="CHEBI:57912"/>
        <dbReference type="ChEBI" id="CHEBI:58866"/>
        <dbReference type="ChEBI" id="CHEBI:59776"/>
        <dbReference type="EC" id="4.2.1.20"/>
    </reaction>
</comment>
<comment type="cofactor">
    <cofactor evidence="1">
        <name>pyridoxal 5'-phosphate</name>
        <dbReference type="ChEBI" id="CHEBI:597326"/>
    </cofactor>
</comment>
<comment type="pathway">
    <text>Amino-acid biosynthesis; L-tryptophan biosynthesis; L-tryptophan from chorismate: step 5/5.</text>
</comment>
<comment type="subunit">
    <text evidence="1">Tetramer of two alpha and two beta chains.</text>
</comment>
<comment type="similarity">
    <text evidence="2">Belongs to the TrpB family.</text>
</comment>
<reference key="1">
    <citation type="journal article" date="1988" name="Mol. Gen. Genet.">
        <title>Cloning of the trp genes from the archaebacterium Methanococcus voltae: nucleotide sequence of the trpBA genes.</title>
        <authorList>
            <person name="Sibold L."/>
            <person name="Henriquet M."/>
        </authorList>
    </citation>
    <scope>NUCLEOTIDE SEQUENCE [GENOMIC DNA]</scope>
    <source>
        <strain>ATCC 33273 / DSM 1537 / NBRC 100457 / OCM 70 / PS</strain>
    </source>
</reference>
<proteinExistence type="inferred from homology"/>
<name>TRPB_METVO</name>
<evidence type="ECO:0000250" key="1"/>
<evidence type="ECO:0000305" key="2"/>
<sequence>MKCNTKCDKNGYFGEFGGQYIPEVLKPAVEELKEAYKELKDDEDFQNELAYYLKHYAGRETPLYYAKNLTEKLGGAKIYLKREDLLHGGAHKTNNTIGQALLAKKMGKTRIIAETGAGQHGVGTSMAGALFGLETEIFMGRVDTERQQPNVARMKLLGAKVTPVDTGSKVLKDAVNEAMRNWTATFENTHYLLGTVMGPHPFPTMVRDFQSVIGKEVKKQIMEQEERLPDYLVACIGGGSNAMGLFHPFLSNNISTGNDDAKNVKMIGIEAAGKGLNTSLHGASITKGEKGVLHGMLSYFLQDEDGQIEEAYSISAGLDYPGIGPEHAYLHNLGRVQYASATDKQALKAFMELTRTEGIIPALESSHAIAYAIENAGNMDKDDIMVINLSGRGDKDLNTVINAVHKLGC</sequence>
<dbReference type="EC" id="4.2.1.20"/>
<dbReference type="EMBL" id="M35130">
    <property type="protein sequence ID" value="AAA72854.1"/>
    <property type="molecule type" value="Genomic_DNA"/>
</dbReference>
<dbReference type="SMR" id="P14638"/>
<dbReference type="OrthoDB" id="371827at2157"/>
<dbReference type="UniPathway" id="UPA00035">
    <property type="reaction ID" value="UER00044"/>
</dbReference>
<dbReference type="GO" id="GO:0005737">
    <property type="term" value="C:cytoplasm"/>
    <property type="evidence" value="ECO:0007669"/>
    <property type="project" value="TreeGrafter"/>
</dbReference>
<dbReference type="GO" id="GO:0004834">
    <property type="term" value="F:tryptophan synthase activity"/>
    <property type="evidence" value="ECO:0007669"/>
    <property type="project" value="UniProtKB-UniRule"/>
</dbReference>
<dbReference type="CDD" id="cd06446">
    <property type="entry name" value="Trp-synth_B"/>
    <property type="match status" value="1"/>
</dbReference>
<dbReference type="FunFam" id="3.40.50.1100:FF:000001">
    <property type="entry name" value="Tryptophan synthase beta chain"/>
    <property type="match status" value="1"/>
</dbReference>
<dbReference type="FunFam" id="3.40.50.1100:FF:000004">
    <property type="entry name" value="Tryptophan synthase beta chain"/>
    <property type="match status" value="1"/>
</dbReference>
<dbReference type="Gene3D" id="3.40.50.1100">
    <property type="match status" value="2"/>
</dbReference>
<dbReference type="HAMAP" id="MF_00133">
    <property type="entry name" value="Trp_synth_beta"/>
    <property type="match status" value="1"/>
</dbReference>
<dbReference type="InterPro" id="IPR006653">
    <property type="entry name" value="Trp_synth_b_CS"/>
</dbReference>
<dbReference type="InterPro" id="IPR006654">
    <property type="entry name" value="Trp_synth_beta"/>
</dbReference>
<dbReference type="InterPro" id="IPR023026">
    <property type="entry name" value="Trp_synth_beta/beta-like"/>
</dbReference>
<dbReference type="InterPro" id="IPR001926">
    <property type="entry name" value="TrpB-like_PALP"/>
</dbReference>
<dbReference type="InterPro" id="IPR036052">
    <property type="entry name" value="TrpB-like_PALP_sf"/>
</dbReference>
<dbReference type="NCBIfam" id="TIGR00263">
    <property type="entry name" value="trpB"/>
    <property type="match status" value="1"/>
</dbReference>
<dbReference type="PANTHER" id="PTHR48077:SF3">
    <property type="entry name" value="TRYPTOPHAN SYNTHASE"/>
    <property type="match status" value="1"/>
</dbReference>
<dbReference type="PANTHER" id="PTHR48077">
    <property type="entry name" value="TRYPTOPHAN SYNTHASE-RELATED"/>
    <property type="match status" value="1"/>
</dbReference>
<dbReference type="Pfam" id="PF00291">
    <property type="entry name" value="PALP"/>
    <property type="match status" value="1"/>
</dbReference>
<dbReference type="PIRSF" id="PIRSF001413">
    <property type="entry name" value="Trp_syn_beta"/>
    <property type="match status" value="1"/>
</dbReference>
<dbReference type="SUPFAM" id="SSF53686">
    <property type="entry name" value="Tryptophan synthase beta subunit-like PLP-dependent enzymes"/>
    <property type="match status" value="1"/>
</dbReference>
<dbReference type="PROSITE" id="PS00168">
    <property type="entry name" value="TRP_SYNTHASE_BETA"/>
    <property type="match status" value="1"/>
</dbReference>
<keyword id="KW-0028">Amino-acid biosynthesis</keyword>
<keyword id="KW-0057">Aromatic amino acid biosynthesis</keyword>
<keyword id="KW-0456">Lyase</keyword>
<keyword id="KW-0663">Pyridoxal phosphate</keyword>
<keyword id="KW-0822">Tryptophan biosynthesis</keyword>
<protein>
    <recommendedName>
        <fullName>Tryptophan synthase beta chain</fullName>
        <ecNumber>4.2.1.20</ecNumber>
    </recommendedName>
</protein>
<organism>
    <name type="scientific">Methanococcus voltae</name>
    <dbReference type="NCBI Taxonomy" id="2188"/>
    <lineage>
        <taxon>Archaea</taxon>
        <taxon>Methanobacteriati</taxon>
        <taxon>Methanobacteriota</taxon>
        <taxon>Methanomada group</taxon>
        <taxon>Methanococci</taxon>
        <taxon>Methanococcales</taxon>
        <taxon>Methanococcaceae</taxon>
        <taxon>Methanococcus</taxon>
    </lineage>
</organism>
<gene>
    <name type="primary">trpB</name>
</gene>
<feature type="chain" id="PRO_0000099045" description="Tryptophan synthase beta chain">
    <location>
        <begin position="1"/>
        <end position="409"/>
    </location>
</feature>
<feature type="modified residue" description="N6-(pyridoxal phosphate)lysine" evidence="1">
    <location>
        <position position="92"/>
    </location>
</feature>
<accession>P14638</accession>